<proteinExistence type="inferred from homology"/>
<protein>
    <recommendedName>
        <fullName evidence="1">ATP synthase subunit beta</fullName>
        <ecNumber evidence="1">7.1.2.2</ecNumber>
    </recommendedName>
    <alternativeName>
        <fullName evidence="1">ATP synthase F1 sector subunit beta</fullName>
    </alternativeName>
    <alternativeName>
        <fullName evidence="1">F-ATPase subunit beta</fullName>
    </alternativeName>
</protein>
<comment type="function">
    <text evidence="1">Produces ATP from ADP in the presence of a proton gradient across the membrane. The catalytic sites are hosted primarily by the beta subunits.</text>
</comment>
<comment type="catalytic activity">
    <reaction evidence="1">
        <text>ATP + H2O + 4 H(+)(in) = ADP + phosphate + 5 H(+)(out)</text>
        <dbReference type="Rhea" id="RHEA:57720"/>
        <dbReference type="ChEBI" id="CHEBI:15377"/>
        <dbReference type="ChEBI" id="CHEBI:15378"/>
        <dbReference type="ChEBI" id="CHEBI:30616"/>
        <dbReference type="ChEBI" id="CHEBI:43474"/>
        <dbReference type="ChEBI" id="CHEBI:456216"/>
        <dbReference type="EC" id="7.1.2.2"/>
    </reaction>
</comment>
<comment type="subunit">
    <text evidence="1">F-type ATPases have 2 components, CF(1) - the catalytic core - and CF(0) - the membrane proton channel. CF(1) has five subunits: alpha(3), beta(3), gamma(1), delta(1), epsilon(1). CF(0) has three main subunits: a(1), b(2) and c(9-12). The alpha and beta chains form an alternating ring which encloses part of the gamma chain. CF(1) is attached to CF(0) by a central stalk formed by the gamma and epsilon chains, while a peripheral stalk is formed by the delta and b chains.</text>
</comment>
<comment type="subcellular location">
    <subcellularLocation>
        <location evidence="1">Cell inner membrane</location>
        <topology evidence="1">Peripheral membrane protein</topology>
    </subcellularLocation>
</comment>
<comment type="similarity">
    <text evidence="1">Belongs to the ATPase alpha/beta chains family.</text>
</comment>
<dbReference type="EC" id="7.1.2.2" evidence="1"/>
<dbReference type="EMBL" id="CP000251">
    <property type="protein sequence ID" value="ABC84111.1"/>
    <property type="molecule type" value="Genomic_DNA"/>
</dbReference>
<dbReference type="RefSeq" id="WP_011423393.1">
    <property type="nucleotide sequence ID" value="NC_007760.1"/>
</dbReference>
<dbReference type="SMR" id="Q2IHQ2"/>
<dbReference type="STRING" id="290397.Adeh_4348"/>
<dbReference type="KEGG" id="ade:Adeh_4348"/>
<dbReference type="eggNOG" id="COG0055">
    <property type="taxonomic scope" value="Bacteria"/>
</dbReference>
<dbReference type="HOGENOM" id="CLU_022398_0_2_7"/>
<dbReference type="OrthoDB" id="9801639at2"/>
<dbReference type="Proteomes" id="UP000001935">
    <property type="component" value="Chromosome"/>
</dbReference>
<dbReference type="GO" id="GO:0005886">
    <property type="term" value="C:plasma membrane"/>
    <property type="evidence" value="ECO:0007669"/>
    <property type="project" value="UniProtKB-SubCell"/>
</dbReference>
<dbReference type="GO" id="GO:0045259">
    <property type="term" value="C:proton-transporting ATP synthase complex"/>
    <property type="evidence" value="ECO:0007669"/>
    <property type="project" value="UniProtKB-KW"/>
</dbReference>
<dbReference type="GO" id="GO:0005524">
    <property type="term" value="F:ATP binding"/>
    <property type="evidence" value="ECO:0007669"/>
    <property type="project" value="UniProtKB-UniRule"/>
</dbReference>
<dbReference type="GO" id="GO:0016887">
    <property type="term" value="F:ATP hydrolysis activity"/>
    <property type="evidence" value="ECO:0007669"/>
    <property type="project" value="InterPro"/>
</dbReference>
<dbReference type="GO" id="GO:0046933">
    <property type="term" value="F:proton-transporting ATP synthase activity, rotational mechanism"/>
    <property type="evidence" value="ECO:0007669"/>
    <property type="project" value="UniProtKB-UniRule"/>
</dbReference>
<dbReference type="CDD" id="cd18110">
    <property type="entry name" value="ATP-synt_F1_beta_C"/>
    <property type="match status" value="1"/>
</dbReference>
<dbReference type="CDD" id="cd18115">
    <property type="entry name" value="ATP-synt_F1_beta_N"/>
    <property type="match status" value="1"/>
</dbReference>
<dbReference type="CDD" id="cd01133">
    <property type="entry name" value="F1-ATPase_beta_CD"/>
    <property type="match status" value="1"/>
</dbReference>
<dbReference type="FunFam" id="1.10.1140.10:FF:000001">
    <property type="entry name" value="ATP synthase subunit beta"/>
    <property type="match status" value="1"/>
</dbReference>
<dbReference type="FunFam" id="2.40.10.170:FF:000005">
    <property type="entry name" value="ATP synthase subunit beta"/>
    <property type="match status" value="1"/>
</dbReference>
<dbReference type="FunFam" id="3.40.50.300:FF:000026">
    <property type="entry name" value="ATP synthase subunit beta"/>
    <property type="match status" value="1"/>
</dbReference>
<dbReference type="Gene3D" id="2.40.10.170">
    <property type="match status" value="1"/>
</dbReference>
<dbReference type="Gene3D" id="1.10.1140.10">
    <property type="entry name" value="Bovine Mitochondrial F1-atpase, Atp Synthase Beta Chain, Chain D, domain 3"/>
    <property type="match status" value="1"/>
</dbReference>
<dbReference type="Gene3D" id="3.40.50.300">
    <property type="entry name" value="P-loop containing nucleotide triphosphate hydrolases"/>
    <property type="match status" value="1"/>
</dbReference>
<dbReference type="HAMAP" id="MF_01347">
    <property type="entry name" value="ATP_synth_beta_bact"/>
    <property type="match status" value="1"/>
</dbReference>
<dbReference type="InterPro" id="IPR003593">
    <property type="entry name" value="AAA+_ATPase"/>
</dbReference>
<dbReference type="InterPro" id="IPR055190">
    <property type="entry name" value="ATP-synt_VA_C"/>
</dbReference>
<dbReference type="InterPro" id="IPR005722">
    <property type="entry name" value="ATP_synth_F1_bsu"/>
</dbReference>
<dbReference type="InterPro" id="IPR020003">
    <property type="entry name" value="ATPase_a/bsu_AS"/>
</dbReference>
<dbReference type="InterPro" id="IPR050053">
    <property type="entry name" value="ATPase_alpha/beta_chains"/>
</dbReference>
<dbReference type="InterPro" id="IPR004100">
    <property type="entry name" value="ATPase_F1/V1/A1_a/bsu_N"/>
</dbReference>
<dbReference type="InterPro" id="IPR036121">
    <property type="entry name" value="ATPase_F1/V1/A1_a/bsu_N_sf"/>
</dbReference>
<dbReference type="InterPro" id="IPR000194">
    <property type="entry name" value="ATPase_F1/V1/A1_a/bsu_nucl-bd"/>
</dbReference>
<dbReference type="InterPro" id="IPR024034">
    <property type="entry name" value="ATPase_F1/V1_b/a_C"/>
</dbReference>
<dbReference type="InterPro" id="IPR027417">
    <property type="entry name" value="P-loop_NTPase"/>
</dbReference>
<dbReference type="NCBIfam" id="TIGR01039">
    <property type="entry name" value="atpD"/>
    <property type="match status" value="1"/>
</dbReference>
<dbReference type="PANTHER" id="PTHR15184">
    <property type="entry name" value="ATP SYNTHASE"/>
    <property type="match status" value="1"/>
</dbReference>
<dbReference type="PANTHER" id="PTHR15184:SF71">
    <property type="entry name" value="ATP SYNTHASE SUBUNIT BETA, MITOCHONDRIAL"/>
    <property type="match status" value="1"/>
</dbReference>
<dbReference type="Pfam" id="PF00006">
    <property type="entry name" value="ATP-synt_ab"/>
    <property type="match status" value="1"/>
</dbReference>
<dbReference type="Pfam" id="PF02874">
    <property type="entry name" value="ATP-synt_ab_N"/>
    <property type="match status" value="1"/>
</dbReference>
<dbReference type="Pfam" id="PF22919">
    <property type="entry name" value="ATP-synt_VA_C"/>
    <property type="match status" value="1"/>
</dbReference>
<dbReference type="PIRSF" id="PIRSF039072">
    <property type="entry name" value="ATPase_subunit_beta"/>
    <property type="match status" value="1"/>
</dbReference>
<dbReference type="SMART" id="SM00382">
    <property type="entry name" value="AAA"/>
    <property type="match status" value="1"/>
</dbReference>
<dbReference type="SUPFAM" id="SSF47917">
    <property type="entry name" value="C-terminal domain of alpha and beta subunits of F1 ATP synthase"/>
    <property type="match status" value="1"/>
</dbReference>
<dbReference type="SUPFAM" id="SSF50615">
    <property type="entry name" value="N-terminal domain of alpha and beta subunits of F1 ATP synthase"/>
    <property type="match status" value="1"/>
</dbReference>
<dbReference type="SUPFAM" id="SSF52540">
    <property type="entry name" value="P-loop containing nucleoside triphosphate hydrolases"/>
    <property type="match status" value="1"/>
</dbReference>
<dbReference type="PROSITE" id="PS00152">
    <property type="entry name" value="ATPASE_ALPHA_BETA"/>
    <property type="match status" value="1"/>
</dbReference>
<evidence type="ECO:0000255" key="1">
    <source>
        <dbReference type="HAMAP-Rule" id="MF_01347"/>
    </source>
</evidence>
<reference key="1">
    <citation type="submission" date="2006-01" db="EMBL/GenBank/DDBJ databases">
        <title>Complete sequence of Anaeromyxobacter dehalogenans 2CP-C.</title>
        <authorList>
            <person name="Copeland A."/>
            <person name="Lucas S."/>
            <person name="Lapidus A."/>
            <person name="Barry K."/>
            <person name="Detter J.C."/>
            <person name="Glavina T."/>
            <person name="Hammon N."/>
            <person name="Israni S."/>
            <person name="Pitluck S."/>
            <person name="Brettin T."/>
            <person name="Bruce D."/>
            <person name="Han C."/>
            <person name="Tapia R."/>
            <person name="Gilna P."/>
            <person name="Kiss H."/>
            <person name="Schmutz J."/>
            <person name="Larimer F."/>
            <person name="Land M."/>
            <person name="Kyrpides N."/>
            <person name="Anderson I."/>
            <person name="Sanford R.A."/>
            <person name="Ritalahti K.M."/>
            <person name="Thomas H.S."/>
            <person name="Kirby J.R."/>
            <person name="Zhulin I.B."/>
            <person name="Loeffler F.E."/>
            <person name="Richardson P."/>
        </authorList>
    </citation>
    <scope>NUCLEOTIDE SEQUENCE [LARGE SCALE GENOMIC DNA]</scope>
    <source>
        <strain>2CP-C</strain>
    </source>
</reference>
<organism>
    <name type="scientific">Anaeromyxobacter dehalogenans (strain 2CP-C)</name>
    <dbReference type="NCBI Taxonomy" id="290397"/>
    <lineage>
        <taxon>Bacteria</taxon>
        <taxon>Pseudomonadati</taxon>
        <taxon>Myxococcota</taxon>
        <taxon>Myxococcia</taxon>
        <taxon>Myxococcales</taxon>
        <taxon>Cystobacterineae</taxon>
        <taxon>Anaeromyxobacteraceae</taxon>
        <taxon>Anaeromyxobacter</taxon>
    </lineage>
</organism>
<feature type="chain" id="PRO_0000254201" description="ATP synthase subunit beta">
    <location>
        <begin position="1"/>
        <end position="482"/>
    </location>
</feature>
<feature type="binding site" evidence="1">
    <location>
        <begin position="161"/>
        <end position="168"/>
    </location>
    <ligand>
        <name>ATP</name>
        <dbReference type="ChEBI" id="CHEBI:30616"/>
    </ligand>
</feature>
<gene>
    <name evidence="1" type="primary">atpD</name>
    <name type="ordered locus">Adeh_4348</name>
</gene>
<sequence>MPTATNVENGRITQVIGPVVDVEFPPGTLPDIYTALKVTNPGVDERQDNLVIEVAQHLGENTARCIAMDSTEGLVRGMPVKNTGAPISVPVGQEVLGRILNVVGEPVDERGPVAATKTLPIHRSAPLLTDLNVKVESFETGIKVIDLLAPYLRGGKIGLFGGAGVGKTVLLMELVNNVAKKRGGFSVFGGVGERTREGNDLYHEMIEAGVINKDDLSKSQCVLVYGQMNEPPGARARVALSALTVAEYFRDVENRDMLLFIDNIFRFTQAGSEVSALLGRIPSAVGYQPTLSTEMGELQERITSTQKGAITSVQAIYVPADDLTDPAPATAFAHLDATTVLNRKLTEIGIYPAVDPLDSTSRILDPNVVGKEHYAVARAVQETLQRYKDLQDIIAILGMDELSEDDKLTVARARKIQRFLSQPFTVAQQFTGNPGKYVELPDTIRGFKEIVDGKHDDLPEQAFYMVGGIEEAVEKAKKLTAG</sequence>
<keyword id="KW-0066">ATP synthesis</keyword>
<keyword id="KW-0067">ATP-binding</keyword>
<keyword id="KW-0997">Cell inner membrane</keyword>
<keyword id="KW-1003">Cell membrane</keyword>
<keyword id="KW-0139">CF(1)</keyword>
<keyword id="KW-0375">Hydrogen ion transport</keyword>
<keyword id="KW-0406">Ion transport</keyword>
<keyword id="KW-0472">Membrane</keyword>
<keyword id="KW-0547">Nucleotide-binding</keyword>
<keyword id="KW-1185">Reference proteome</keyword>
<keyword id="KW-1278">Translocase</keyword>
<keyword id="KW-0813">Transport</keyword>
<accession>Q2IHQ2</accession>
<name>ATPB_ANADE</name>